<comment type="function">
    <text evidence="1">Participates in a DNA-damage check-point that is active prior to asymmetric division when DNA is damaged. DisA forms globular foci that rapidly scan along the chromosomes during sporulation, searching for lesions. When a lesion is present, DisA pauses at the lesion site. This triggers a cellular response that culminates in a temporary block in sporulation initiation.</text>
</comment>
<comment type="function">
    <text evidence="1">Also has diadenylate cyclase activity, catalyzing the condensation of 2 ATP molecules into cyclic di-AMP (c-di-AMP). c-di-AMP acts as a signaling molecule that couples DNA integrity with progression of sporulation. The rise in c-di-AMP level generated by DisA while scanning the chromosome, operates as a positive signal that advances sporulation; upon encountering a lesion, the DisA focus arrests at the damaged site and halts c-di-AMP synthesis.</text>
</comment>
<comment type="catalytic activity">
    <reaction evidence="1">
        <text>2 ATP = 3',3'-c-di-AMP + 2 diphosphate</text>
        <dbReference type="Rhea" id="RHEA:35655"/>
        <dbReference type="ChEBI" id="CHEBI:30616"/>
        <dbReference type="ChEBI" id="CHEBI:33019"/>
        <dbReference type="ChEBI" id="CHEBI:71500"/>
        <dbReference type="EC" id="2.7.7.85"/>
    </reaction>
</comment>
<comment type="cofactor">
    <cofactor evidence="1">
        <name>Mg(2+)</name>
        <dbReference type="ChEBI" id="CHEBI:18420"/>
    </cofactor>
</comment>
<comment type="subunit">
    <text evidence="1">Homooctamer.</text>
</comment>
<comment type="similarity">
    <text evidence="1">Belongs to the DisA family.</text>
</comment>
<keyword id="KW-0067">ATP-binding</keyword>
<keyword id="KW-0227">DNA damage</keyword>
<keyword id="KW-0234">DNA repair</keyword>
<keyword id="KW-0238">DNA-binding</keyword>
<keyword id="KW-0460">Magnesium</keyword>
<keyword id="KW-0547">Nucleotide-binding</keyword>
<keyword id="KW-0548">Nucleotidyltransferase</keyword>
<keyword id="KW-1185">Reference proteome</keyword>
<keyword id="KW-0808">Transferase</keyword>
<organism>
    <name type="scientific">Clostridium tetani (strain Massachusetts / E88)</name>
    <dbReference type="NCBI Taxonomy" id="212717"/>
    <lineage>
        <taxon>Bacteria</taxon>
        <taxon>Bacillati</taxon>
        <taxon>Bacillota</taxon>
        <taxon>Clostridia</taxon>
        <taxon>Eubacteriales</taxon>
        <taxon>Clostridiaceae</taxon>
        <taxon>Clostridium</taxon>
    </lineage>
</organism>
<gene>
    <name evidence="1" type="primary">disA</name>
    <name type="ordered locus">CTC_02629</name>
</gene>
<dbReference type="EC" id="2.7.7.85" evidence="1"/>
<dbReference type="EMBL" id="AE015927">
    <property type="protein sequence ID" value="AAO37079.1"/>
    <property type="molecule type" value="Genomic_DNA"/>
</dbReference>
<dbReference type="SMR" id="Q890L8"/>
<dbReference type="STRING" id="212717.CTC_02629"/>
<dbReference type="KEGG" id="ctc:CTC_02629"/>
<dbReference type="HOGENOM" id="CLU_787128_0_0_9"/>
<dbReference type="Proteomes" id="UP000001412">
    <property type="component" value="Chromosome"/>
</dbReference>
<dbReference type="GO" id="GO:0004016">
    <property type="term" value="F:adenylate cyclase activity"/>
    <property type="evidence" value="ECO:0007669"/>
    <property type="project" value="TreeGrafter"/>
</dbReference>
<dbReference type="GO" id="GO:0005524">
    <property type="term" value="F:ATP binding"/>
    <property type="evidence" value="ECO:0007669"/>
    <property type="project" value="UniProtKB-UniRule"/>
</dbReference>
<dbReference type="GO" id="GO:0140097">
    <property type="term" value="F:catalytic activity, acting on DNA"/>
    <property type="evidence" value="ECO:0007669"/>
    <property type="project" value="UniProtKB-ARBA"/>
</dbReference>
<dbReference type="GO" id="GO:0106408">
    <property type="term" value="F:diadenylate cyclase activity"/>
    <property type="evidence" value="ECO:0007669"/>
    <property type="project" value="UniProtKB-EC"/>
</dbReference>
<dbReference type="GO" id="GO:0003677">
    <property type="term" value="F:DNA binding"/>
    <property type="evidence" value="ECO:0007669"/>
    <property type="project" value="UniProtKB-UniRule"/>
</dbReference>
<dbReference type="GO" id="GO:0016787">
    <property type="term" value="F:hydrolase activity"/>
    <property type="evidence" value="ECO:0007669"/>
    <property type="project" value="UniProtKB-ARBA"/>
</dbReference>
<dbReference type="GO" id="GO:0006281">
    <property type="term" value="P:DNA repair"/>
    <property type="evidence" value="ECO:0007669"/>
    <property type="project" value="UniProtKB-UniRule"/>
</dbReference>
<dbReference type="FunFam" id="3.40.1700.10:FF:000001">
    <property type="entry name" value="DNA integrity scanning protein DisA"/>
    <property type="match status" value="1"/>
</dbReference>
<dbReference type="Gene3D" id="1.10.150.20">
    <property type="entry name" value="5' to 3' exonuclease, C-terminal subdomain"/>
    <property type="match status" value="1"/>
</dbReference>
<dbReference type="Gene3D" id="1.20.1260.110">
    <property type="entry name" value="DNA integrity scanning linker region"/>
    <property type="match status" value="1"/>
</dbReference>
<dbReference type="Gene3D" id="3.40.1700.10">
    <property type="entry name" value="DNA integrity scanning protein, DisA, N-terminal domain"/>
    <property type="match status" value="1"/>
</dbReference>
<dbReference type="HAMAP" id="MF_01438">
    <property type="entry name" value="DisA"/>
    <property type="match status" value="1"/>
</dbReference>
<dbReference type="InterPro" id="IPR050338">
    <property type="entry name" value="DisA"/>
</dbReference>
<dbReference type="InterPro" id="IPR038331">
    <property type="entry name" value="DisA_sf"/>
</dbReference>
<dbReference type="InterPro" id="IPR036888">
    <property type="entry name" value="DNA_integrity_DisA_N_sf"/>
</dbReference>
<dbReference type="InterPro" id="IPR018906">
    <property type="entry name" value="DNA_integrity_scan_DisA_link"/>
</dbReference>
<dbReference type="InterPro" id="IPR003390">
    <property type="entry name" value="DNA_integrity_scan_DisA_N"/>
</dbReference>
<dbReference type="InterPro" id="IPR023763">
    <property type="entry name" value="DNA_integrity_scanning_protein"/>
</dbReference>
<dbReference type="InterPro" id="IPR000445">
    <property type="entry name" value="HhH_motif"/>
</dbReference>
<dbReference type="InterPro" id="IPR010994">
    <property type="entry name" value="RuvA_2-like"/>
</dbReference>
<dbReference type="NCBIfam" id="NF010009">
    <property type="entry name" value="PRK13482.1"/>
    <property type="match status" value="1"/>
</dbReference>
<dbReference type="PANTHER" id="PTHR34185">
    <property type="entry name" value="DIADENYLATE CYCLASE"/>
    <property type="match status" value="1"/>
</dbReference>
<dbReference type="PANTHER" id="PTHR34185:SF3">
    <property type="entry name" value="DNA INTEGRITY SCANNING PROTEIN DISA"/>
    <property type="match status" value="1"/>
</dbReference>
<dbReference type="Pfam" id="PF02457">
    <property type="entry name" value="DAC"/>
    <property type="match status" value="1"/>
</dbReference>
<dbReference type="Pfam" id="PF10635">
    <property type="entry name" value="DisA-linker"/>
    <property type="match status" value="1"/>
</dbReference>
<dbReference type="Pfam" id="PF00633">
    <property type="entry name" value="HHH"/>
    <property type="match status" value="1"/>
</dbReference>
<dbReference type="SUPFAM" id="SSF47781">
    <property type="entry name" value="RuvA domain 2-like"/>
    <property type="match status" value="1"/>
</dbReference>
<dbReference type="SUPFAM" id="SSF143597">
    <property type="entry name" value="YojJ-like"/>
    <property type="match status" value="1"/>
</dbReference>
<dbReference type="PROSITE" id="PS51794">
    <property type="entry name" value="DAC"/>
    <property type="match status" value="1"/>
</dbReference>
<accession>Q890L8</accession>
<sequence length="360" mass="41098">MIKVRLQKDNDLMDILNIMAPGTPLRDGLENILRAKTGGLIVIGDSEEILDIVDGGFTIDAEYSPSYVYELAKMDGAIILSGDVKRIIRANAQLMPDPSVPTFETGTRHRTADRIAKQTGNIVIAISQRRNIITIYRNNIKYVLRDSSVILGKANQALQTLEKYVSVLDKVINNLNVLEFRDLVTLFDVMTAIQRTEMVMRIVWEMERYICELGNEARLISMQLNELVRYVEEDEILLIRDYCETYMDYTEVYDEIQSMSSEELINLDQISKILGYTGVPLVDTFISPRGYRMLHRIPRIPSNVIENVVKNFKELKAVMEASYEQLDKVEGIGEARAKAIKNGLRRLKEQANIDKNIVTR</sequence>
<name>DISA_CLOTE</name>
<reference key="1">
    <citation type="journal article" date="2003" name="Proc. Natl. Acad. Sci. U.S.A.">
        <title>The genome sequence of Clostridium tetani, the causative agent of tetanus disease.</title>
        <authorList>
            <person name="Brueggemann H."/>
            <person name="Baeumer S."/>
            <person name="Fricke W.F."/>
            <person name="Wiezer A."/>
            <person name="Liesegang H."/>
            <person name="Decker I."/>
            <person name="Herzberg C."/>
            <person name="Martinez-Arias R."/>
            <person name="Merkl R."/>
            <person name="Henne A."/>
            <person name="Gottschalk G."/>
        </authorList>
    </citation>
    <scope>NUCLEOTIDE SEQUENCE [LARGE SCALE GENOMIC DNA]</scope>
    <source>
        <strain>Massachusetts / E88</strain>
    </source>
</reference>
<evidence type="ECO:0000255" key="1">
    <source>
        <dbReference type="HAMAP-Rule" id="MF_01438"/>
    </source>
</evidence>
<evidence type="ECO:0000255" key="2">
    <source>
        <dbReference type="PROSITE-ProRule" id="PRU01130"/>
    </source>
</evidence>
<proteinExistence type="inferred from homology"/>
<feature type="chain" id="PRO_0000255642" description="DNA integrity scanning protein DisA">
    <location>
        <begin position="1"/>
        <end position="360"/>
    </location>
</feature>
<feature type="domain" description="DAC" evidence="2">
    <location>
        <begin position="9"/>
        <end position="147"/>
    </location>
</feature>
<feature type="binding site" evidence="1">
    <location>
        <position position="76"/>
    </location>
    <ligand>
        <name>ATP</name>
        <dbReference type="ChEBI" id="CHEBI:30616"/>
    </ligand>
</feature>
<feature type="binding site" evidence="1">
    <location>
        <position position="94"/>
    </location>
    <ligand>
        <name>ATP</name>
        <dbReference type="ChEBI" id="CHEBI:30616"/>
    </ligand>
</feature>
<feature type="binding site" evidence="1">
    <location>
        <begin position="107"/>
        <end position="111"/>
    </location>
    <ligand>
        <name>ATP</name>
        <dbReference type="ChEBI" id="CHEBI:30616"/>
    </ligand>
</feature>
<protein>
    <recommendedName>
        <fullName evidence="1">DNA integrity scanning protein DisA</fullName>
    </recommendedName>
    <alternativeName>
        <fullName evidence="1">Cyclic di-AMP synthase</fullName>
        <shortName evidence="1">c-di-AMP synthase</shortName>
    </alternativeName>
    <alternativeName>
        <fullName evidence="1">Diadenylate cyclase</fullName>
        <ecNumber evidence="1">2.7.7.85</ecNumber>
    </alternativeName>
</protein>